<organism>
    <name type="scientific">Arabidopsis thaliana</name>
    <name type="common">Mouse-ear cress</name>
    <dbReference type="NCBI Taxonomy" id="3702"/>
    <lineage>
        <taxon>Eukaryota</taxon>
        <taxon>Viridiplantae</taxon>
        <taxon>Streptophyta</taxon>
        <taxon>Embryophyta</taxon>
        <taxon>Tracheophyta</taxon>
        <taxon>Spermatophyta</taxon>
        <taxon>Magnoliopsida</taxon>
        <taxon>eudicotyledons</taxon>
        <taxon>Gunneridae</taxon>
        <taxon>Pentapetalae</taxon>
        <taxon>rosids</taxon>
        <taxon>malvids</taxon>
        <taxon>Brassicales</taxon>
        <taxon>Brassicaceae</taxon>
        <taxon>Camelineae</taxon>
        <taxon>Arabidopsis</taxon>
    </lineage>
</organism>
<comment type="subcellular location">
    <subcellularLocation>
        <location evidence="1">Membrane</location>
        <topology evidence="1">Multi-pass membrane protein</topology>
    </subcellularLocation>
</comment>
<comment type="sequence caution" evidence="3">
    <conflict type="erroneous gene model prediction">
        <sequence resource="EMBL-CDS" id="AAG51915"/>
    </conflict>
</comment>
<evidence type="ECO:0000255" key="1"/>
<evidence type="ECO:0000256" key="2">
    <source>
        <dbReference type="SAM" id="MobiDB-lite"/>
    </source>
</evidence>
<evidence type="ECO:0000305" key="3"/>
<name>Y1514_ARATH</name>
<dbReference type="EMBL" id="AC013258">
    <property type="protein sequence ID" value="AAG51915.1"/>
    <property type="status" value="ALT_SEQ"/>
    <property type="molecule type" value="Genomic_DNA"/>
</dbReference>
<dbReference type="EMBL" id="AC025814">
    <property type="protein sequence ID" value="AAG12694.1"/>
    <property type="molecule type" value="Genomic_DNA"/>
</dbReference>
<dbReference type="EMBL" id="CP002684">
    <property type="protein sequence ID" value="AEE35676.1"/>
    <property type="molecule type" value="Genomic_DNA"/>
</dbReference>
<dbReference type="EMBL" id="AK117881">
    <property type="protein sequence ID" value="BAC42521.1"/>
    <property type="molecule type" value="mRNA"/>
</dbReference>
<dbReference type="EMBL" id="BT005930">
    <property type="protein sequence ID" value="AAO64865.1"/>
    <property type="molecule type" value="mRNA"/>
</dbReference>
<dbReference type="PIR" id="E96781">
    <property type="entry name" value="E96781"/>
</dbReference>
<dbReference type="RefSeq" id="NP_177650.1">
    <property type="nucleotide sequence ID" value="NM_106170.5"/>
</dbReference>
<dbReference type="SMR" id="Q9FRK5"/>
<dbReference type="BioGRID" id="29070">
    <property type="interactions" value="3"/>
</dbReference>
<dbReference type="FunCoup" id="Q9FRK5">
    <property type="interactions" value="1032"/>
</dbReference>
<dbReference type="IntAct" id="Q9FRK5">
    <property type="interactions" value="3"/>
</dbReference>
<dbReference type="STRING" id="3702.Q9FRK5"/>
<dbReference type="iPTMnet" id="Q9FRK5"/>
<dbReference type="PaxDb" id="3702-AT1G75140.1"/>
<dbReference type="ProteomicsDB" id="242420"/>
<dbReference type="EnsemblPlants" id="AT1G75140.1">
    <property type="protein sequence ID" value="AT1G75140.1"/>
    <property type="gene ID" value="AT1G75140"/>
</dbReference>
<dbReference type="GeneID" id="843851"/>
<dbReference type="Gramene" id="AT1G75140.1">
    <property type="protein sequence ID" value="AT1G75140.1"/>
    <property type="gene ID" value="AT1G75140"/>
</dbReference>
<dbReference type="KEGG" id="ath:AT1G75140"/>
<dbReference type="Araport" id="AT1G75140"/>
<dbReference type="TAIR" id="AT1G75140"/>
<dbReference type="eggNOG" id="ENOG502QQN0">
    <property type="taxonomic scope" value="Eukaryota"/>
</dbReference>
<dbReference type="HOGENOM" id="CLU_027388_0_0_1"/>
<dbReference type="InParanoid" id="Q9FRK5"/>
<dbReference type="OMA" id="TQYYGRV"/>
<dbReference type="PRO" id="PR:Q9FRK5"/>
<dbReference type="Proteomes" id="UP000006548">
    <property type="component" value="Chromosome 1"/>
</dbReference>
<dbReference type="ExpressionAtlas" id="Q9FRK5">
    <property type="expression patterns" value="baseline and differential"/>
</dbReference>
<dbReference type="GO" id="GO:0005783">
    <property type="term" value="C:endoplasmic reticulum"/>
    <property type="evidence" value="ECO:0007005"/>
    <property type="project" value="TAIR"/>
</dbReference>
<dbReference type="GO" id="GO:0016020">
    <property type="term" value="C:membrane"/>
    <property type="evidence" value="ECO:0007669"/>
    <property type="project" value="UniProtKB-SubCell"/>
</dbReference>
<dbReference type="GO" id="GO:0005739">
    <property type="term" value="C:mitochondrion"/>
    <property type="evidence" value="ECO:0007005"/>
    <property type="project" value="TAIR"/>
</dbReference>
<dbReference type="InterPro" id="IPR045288">
    <property type="entry name" value="At1g75140-like"/>
</dbReference>
<dbReference type="InterPro" id="IPR036322">
    <property type="entry name" value="WD40_repeat_dom_sf"/>
</dbReference>
<dbReference type="PANTHER" id="PTHR35464">
    <property type="entry name" value="OS06G0115200 PROTEIN"/>
    <property type="match status" value="1"/>
</dbReference>
<dbReference type="PANTHER" id="PTHR35464:SF1">
    <property type="entry name" value="OS06G0115200 PROTEIN"/>
    <property type="match status" value="1"/>
</dbReference>
<dbReference type="SUPFAM" id="SSF50978">
    <property type="entry name" value="WD40 repeat-like"/>
    <property type="match status" value="1"/>
</dbReference>
<sequence length="617" mass="68909">MADSQNGKSAFFFFFVSLILLFLSPSYSDVTASESDPIPYENSDASPGVVTSSESDRQGVSLHRLEELVRNLTELVARLDAKLSETPFKVKKEITRDEIEEKAKAFSVTKYSPFWSERFEFTSAVKLDSEATCINVLPFRDHEGLSKYFAVGDSSGRVFVFLRNGDVLVEFFTTCDSPITAMVSYMSVYKNESFVVTGHQSGVILLHRLREGSIGEDLNSAVMENVGKFDGTEDGLQVTLLEVHHVGRVRYILATDLSGKLTVFTENRTVYGSVSPTSRPLVFLKQRLLFLTETGAGSLDLRSMKIRESECEGLNHSLARSYVFDASERAKAYGFTSEGEIIHVLLLGDIMNFKCRVRSKKKVQMEEPVALQAIKGYLLIVNQEKVFVYNVSTQHYVRTTGPRLLFPAALEDIRSTFLSHRESTKTTDHQKLEKVTPLIASDREKLLVMGLGDGYVATYKSKLPISKAEFNTMLWSSPVFFFILFLFGAWHFFSKKKESLTAWGPDDPFSSTTMSSSSTTTAQNSSAFSESTRRNDDHMDLRRRYVSPSRYPPGAATGAYRSVGSNDPSSRAPVETTNYRTTAQEMKYRGGSGLDSGGFGKRRESLFGNNKALDDES</sequence>
<reference key="1">
    <citation type="journal article" date="2000" name="Nature">
        <title>Sequence and analysis of chromosome 1 of the plant Arabidopsis thaliana.</title>
        <authorList>
            <person name="Theologis A."/>
            <person name="Ecker J.R."/>
            <person name="Palm C.J."/>
            <person name="Federspiel N.A."/>
            <person name="Kaul S."/>
            <person name="White O."/>
            <person name="Alonso J."/>
            <person name="Altafi H."/>
            <person name="Araujo R."/>
            <person name="Bowman C.L."/>
            <person name="Brooks S.Y."/>
            <person name="Buehler E."/>
            <person name="Chan A."/>
            <person name="Chao Q."/>
            <person name="Chen H."/>
            <person name="Cheuk R.F."/>
            <person name="Chin C.W."/>
            <person name="Chung M.K."/>
            <person name="Conn L."/>
            <person name="Conway A.B."/>
            <person name="Conway A.R."/>
            <person name="Creasy T.H."/>
            <person name="Dewar K."/>
            <person name="Dunn P."/>
            <person name="Etgu P."/>
            <person name="Feldblyum T.V."/>
            <person name="Feng J.-D."/>
            <person name="Fong B."/>
            <person name="Fujii C.Y."/>
            <person name="Gill J.E."/>
            <person name="Goldsmith A.D."/>
            <person name="Haas B."/>
            <person name="Hansen N.F."/>
            <person name="Hughes B."/>
            <person name="Huizar L."/>
            <person name="Hunter J.L."/>
            <person name="Jenkins J."/>
            <person name="Johnson-Hopson C."/>
            <person name="Khan S."/>
            <person name="Khaykin E."/>
            <person name="Kim C.J."/>
            <person name="Koo H.L."/>
            <person name="Kremenetskaia I."/>
            <person name="Kurtz D.B."/>
            <person name="Kwan A."/>
            <person name="Lam B."/>
            <person name="Langin-Hooper S."/>
            <person name="Lee A."/>
            <person name="Lee J.M."/>
            <person name="Lenz C.A."/>
            <person name="Li J.H."/>
            <person name="Li Y.-P."/>
            <person name="Lin X."/>
            <person name="Liu S.X."/>
            <person name="Liu Z.A."/>
            <person name="Luros J.S."/>
            <person name="Maiti R."/>
            <person name="Marziali A."/>
            <person name="Militscher J."/>
            <person name="Miranda M."/>
            <person name="Nguyen M."/>
            <person name="Nierman W.C."/>
            <person name="Osborne B.I."/>
            <person name="Pai G."/>
            <person name="Peterson J."/>
            <person name="Pham P.K."/>
            <person name="Rizzo M."/>
            <person name="Rooney T."/>
            <person name="Rowley D."/>
            <person name="Sakano H."/>
            <person name="Salzberg S.L."/>
            <person name="Schwartz J.R."/>
            <person name="Shinn P."/>
            <person name="Southwick A.M."/>
            <person name="Sun H."/>
            <person name="Tallon L.J."/>
            <person name="Tambunga G."/>
            <person name="Toriumi M.J."/>
            <person name="Town C.D."/>
            <person name="Utterback T."/>
            <person name="Van Aken S."/>
            <person name="Vaysberg M."/>
            <person name="Vysotskaia V.S."/>
            <person name="Walker M."/>
            <person name="Wu D."/>
            <person name="Yu G."/>
            <person name="Fraser C.M."/>
            <person name="Venter J.C."/>
            <person name="Davis R.W."/>
        </authorList>
    </citation>
    <scope>NUCLEOTIDE SEQUENCE [LARGE SCALE GENOMIC DNA]</scope>
    <source>
        <strain>cv. Columbia</strain>
    </source>
</reference>
<reference key="2">
    <citation type="journal article" date="2017" name="Plant J.">
        <title>Araport11: a complete reannotation of the Arabidopsis thaliana reference genome.</title>
        <authorList>
            <person name="Cheng C.Y."/>
            <person name="Krishnakumar V."/>
            <person name="Chan A.P."/>
            <person name="Thibaud-Nissen F."/>
            <person name="Schobel S."/>
            <person name="Town C.D."/>
        </authorList>
    </citation>
    <scope>GENOME REANNOTATION</scope>
    <source>
        <strain>cv. Columbia</strain>
    </source>
</reference>
<reference key="3">
    <citation type="journal article" date="2002" name="Science">
        <title>Functional annotation of a full-length Arabidopsis cDNA collection.</title>
        <authorList>
            <person name="Seki M."/>
            <person name="Narusaka M."/>
            <person name="Kamiya A."/>
            <person name="Ishida J."/>
            <person name="Satou M."/>
            <person name="Sakurai T."/>
            <person name="Nakajima M."/>
            <person name="Enju A."/>
            <person name="Akiyama K."/>
            <person name="Oono Y."/>
            <person name="Muramatsu M."/>
            <person name="Hayashizaki Y."/>
            <person name="Kawai J."/>
            <person name="Carninci P."/>
            <person name="Itoh M."/>
            <person name="Ishii Y."/>
            <person name="Arakawa T."/>
            <person name="Shibata K."/>
            <person name="Shinagawa A."/>
            <person name="Shinozaki K."/>
        </authorList>
    </citation>
    <scope>NUCLEOTIDE SEQUENCE [LARGE SCALE MRNA]</scope>
    <source>
        <strain>cv. Columbia</strain>
    </source>
</reference>
<reference key="4">
    <citation type="journal article" date="2003" name="Science">
        <title>Empirical analysis of transcriptional activity in the Arabidopsis genome.</title>
        <authorList>
            <person name="Yamada K."/>
            <person name="Lim J."/>
            <person name="Dale J.M."/>
            <person name="Chen H."/>
            <person name="Shinn P."/>
            <person name="Palm C.J."/>
            <person name="Southwick A.M."/>
            <person name="Wu H.C."/>
            <person name="Kim C.J."/>
            <person name="Nguyen M."/>
            <person name="Pham P.K."/>
            <person name="Cheuk R.F."/>
            <person name="Karlin-Newmann G."/>
            <person name="Liu S.X."/>
            <person name="Lam B."/>
            <person name="Sakano H."/>
            <person name="Wu T."/>
            <person name="Yu G."/>
            <person name="Miranda M."/>
            <person name="Quach H.L."/>
            <person name="Tripp M."/>
            <person name="Chang C.H."/>
            <person name="Lee J.M."/>
            <person name="Toriumi M.J."/>
            <person name="Chan M.M."/>
            <person name="Tang C.C."/>
            <person name="Onodera C.S."/>
            <person name="Deng J.M."/>
            <person name="Akiyama K."/>
            <person name="Ansari Y."/>
            <person name="Arakawa T."/>
            <person name="Banh J."/>
            <person name="Banno F."/>
            <person name="Bowser L."/>
            <person name="Brooks S.Y."/>
            <person name="Carninci P."/>
            <person name="Chao Q."/>
            <person name="Choy N."/>
            <person name="Enju A."/>
            <person name="Goldsmith A.D."/>
            <person name="Gurjal M."/>
            <person name="Hansen N.F."/>
            <person name="Hayashizaki Y."/>
            <person name="Johnson-Hopson C."/>
            <person name="Hsuan V.W."/>
            <person name="Iida K."/>
            <person name="Karnes M."/>
            <person name="Khan S."/>
            <person name="Koesema E."/>
            <person name="Ishida J."/>
            <person name="Jiang P.X."/>
            <person name="Jones T."/>
            <person name="Kawai J."/>
            <person name="Kamiya A."/>
            <person name="Meyers C."/>
            <person name="Nakajima M."/>
            <person name="Narusaka M."/>
            <person name="Seki M."/>
            <person name="Sakurai T."/>
            <person name="Satou M."/>
            <person name="Tamse R."/>
            <person name="Vaysberg M."/>
            <person name="Wallender E.K."/>
            <person name="Wong C."/>
            <person name="Yamamura Y."/>
            <person name="Yuan S."/>
            <person name="Shinozaki K."/>
            <person name="Davis R.W."/>
            <person name="Theologis A."/>
            <person name="Ecker J.R."/>
        </authorList>
    </citation>
    <scope>NUCLEOTIDE SEQUENCE [LARGE SCALE MRNA]</scope>
    <source>
        <strain>cv. Columbia</strain>
    </source>
</reference>
<reference key="5">
    <citation type="journal article" date="2009" name="Plant Physiol.">
        <title>Large-scale Arabidopsis phosphoproteome profiling reveals novel chloroplast kinase substrates and phosphorylation networks.</title>
        <authorList>
            <person name="Reiland S."/>
            <person name="Messerli G."/>
            <person name="Baerenfaller K."/>
            <person name="Gerrits B."/>
            <person name="Endler A."/>
            <person name="Grossmann J."/>
            <person name="Gruissem W."/>
            <person name="Baginsky S."/>
        </authorList>
    </citation>
    <scope>IDENTIFICATION BY MASS SPECTROMETRY [LARGE SCALE ANALYSIS]</scope>
</reference>
<proteinExistence type="evidence at protein level"/>
<gene>
    <name type="ordered locus">At1g75140</name>
    <name type="ORF">22H5.14</name>
</gene>
<feature type="chain" id="PRO_0000300107" description="Uncharacterized membrane protein At1g75140">
    <location>
        <begin position="1"/>
        <end position="617"/>
    </location>
</feature>
<feature type="transmembrane region" description="Helical" evidence="1">
    <location>
        <begin position="10"/>
        <end position="30"/>
    </location>
</feature>
<feature type="transmembrane region" description="Helical" evidence="1">
    <location>
        <begin position="473"/>
        <end position="493"/>
    </location>
</feature>
<feature type="region of interest" description="Disordered" evidence="2">
    <location>
        <begin position="34"/>
        <end position="58"/>
    </location>
</feature>
<feature type="region of interest" description="Disordered" evidence="2">
    <location>
        <begin position="511"/>
        <end position="617"/>
    </location>
</feature>
<feature type="coiled-coil region" evidence="1">
    <location>
        <begin position="60"/>
        <end position="86"/>
    </location>
</feature>
<feature type="compositionally biased region" description="Polar residues" evidence="2">
    <location>
        <begin position="43"/>
        <end position="53"/>
    </location>
</feature>
<feature type="compositionally biased region" description="Low complexity" evidence="2">
    <location>
        <begin position="511"/>
        <end position="529"/>
    </location>
</feature>
<feature type="compositionally biased region" description="Basic and acidic residues" evidence="2">
    <location>
        <begin position="531"/>
        <end position="543"/>
    </location>
</feature>
<feature type="compositionally biased region" description="Polar residues" evidence="2">
    <location>
        <begin position="563"/>
        <end position="584"/>
    </location>
</feature>
<feature type="compositionally biased region" description="Gly residues" evidence="2">
    <location>
        <begin position="590"/>
        <end position="599"/>
    </location>
</feature>
<feature type="sequence conflict" description="In Ref. 3; BAC42521 and 4; AAO64865." evidence="3" ref="3 4">
    <original>A</original>
    <variation>T</variation>
    <location>
        <position position="330"/>
    </location>
</feature>
<keyword id="KW-0175">Coiled coil</keyword>
<keyword id="KW-0472">Membrane</keyword>
<keyword id="KW-1185">Reference proteome</keyword>
<keyword id="KW-0812">Transmembrane</keyword>
<keyword id="KW-1133">Transmembrane helix</keyword>
<accession>Q9FRK5</accession>
<accession>Q8GY41</accession>
<accession>Q9C9Q7</accession>
<protein>
    <recommendedName>
        <fullName>Uncharacterized membrane protein At1g75140</fullName>
    </recommendedName>
</protein>